<comment type="similarity">
    <text evidence="3">Belongs to the peptidase S8 family.</text>
</comment>
<comment type="sequence caution" evidence="3">
    <conflict type="erroneous initiation">
        <sequence resource="EMBL-CDS" id="BAA13890"/>
    </conflict>
</comment>
<sequence length="451" mass="48733">MRVSWISGLLLVAHLAPSSAFNPLRFFLDDTFSSGATEEHFMGPSDDGFALQQPTNYDPSMPFPLDESASAAVDAVSNNYIVMFKPSVDKSKLEQHHRWIEHLHEKRSLDFKDVSTFLMKHTFEIGDAFLGYAGRFSPWLVAELQKHPDIALVEPDRVMHVMTEQTFAPWGLARVSHRKKLGFFTMTRYQYNETAGEGVTAYVIDTGINIEHQDFQGRATWGATIPTGEGEVDDHGHGTHVAGTIAGKTFGVSKNAKLVAVKVMRADGTGTVSDIIKGIEFAFKQSKKDKESIASVVNMSIGGDASTALDLAVNAAIAGGLFFAVAAGNDAEDACGTSPARVSNAMTVGASTWNDQIASFSNIGSCVDIFAPGSLILSDWIGSNRASMILSGTSMASPHVAGLAAYFISLDPSLANHPVELKKYMLKFALKDLLNGIPEDTPNVLAFNNYE</sequence>
<name>PSP3_SCHPO</name>
<reference key="1">
    <citation type="journal article" date="1997" name="DNA Res.">
        <title>Identification of open reading frames in Schizosaccharomyces pombe cDNAs.</title>
        <authorList>
            <person name="Yoshioka S."/>
            <person name="Kato K."/>
            <person name="Nakai K."/>
            <person name="Okayama H."/>
            <person name="Nojima H."/>
        </authorList>
    </citation>
    <scope>NUCLEOTIDE SEQUENCE [LARGE SCALE MRNA]</scope>
    <source>
        <strain>PR745</strain>
    </source>
</reference>
<reference key="2">
    <citation type="journal article" date="2002" name="Nature">
        <title>The genome sequence of Schizosaccharomyces pombe.</title>
        <authorList>
            <person name="Wood V."/>
            <person name="Gwilliam R."/>
            <person name="Rajandream M.A."/>
            <person name="Lyne M.H."/>
            <person name="Lyne R."/>
            <person name="Stewart A."/>
            <person name="Sgouros J.G."/>
            <person name="Peat N."/>
            <person name="Hayles J."/>
            <person name="Baker S.G."/>
            <person name="Basham D."/>
            <person name="Bowman S."/>
            <person name="Brooks K."/>
            <person name="Brown D."/>
            <person name="Brown S."/>
            <person name="Chillingworth T."/>
            <person name="Churcher C.M."/>
            <person name="Collins M."/>
            <person name="Connor R."/>
            <person name="Cronin A."/>
            <person name="Davis P."/>
            <person name="Feltwell T."/>
            <person name="Fraser A."/>
            <person name="Gentles S."/>
            <person name="Goble A."/>
            <person name="Hamlin N."/>
            <person name="Harris D.E."/>
            <person name="Hidalgo J."/>
            <person name="Hodgson G."/>
            <person name="Holroyd S."/>
            <person name="Hornsby T."/>
            <person name="Howarth S."/>
            <person name="Huckle E.J."/>
            <person name="Hunt S."/>
            <person name="Jagels K."/>
            <person name="James K.D."/>
            <person name="Jones L."/>
            <person name="Jones M."/>
            <person name="Leather S."/>
            <person name="McDonald S."/>
            <person name="McLean J."/>
            <person name="Mooney P."/>
            <person name="Moule S."/>
            <person name="Mungall K.L."/>
            <person name="Murphy L.D."/>
            <person name="Niblett D."/>
            <person name="Odell C."/>
            <person name="Oliver K."/>
            <person name="O'Neil S."/>
            <person name="Pearson D."/>
            <person name="Quail M.A."/>
            <person name="Rabbinowitsch E."/>
            <person name="Rutherford K.M."/>
            <person name="Rutter S."/>
            <person name="Saunders D."/>
            <person name="Seeger K."/>
            <person name="Sharp S."/>
            <person name="Skelton J."/>
            <person name="Simmonds M.N."/>
            <person name="Squares R."/>
            <person name="Squares S."/>
            <person name="Stevens K."/>
            <person name="Taylor K."/>
            <person name="Taylor R.G."/>
            <person name="Tivey A."/>
            <person name="Walsh S.V."/>
            <person name="Warren T."/>
            <person name="Whitehead S."/>
            <person name="Woodward J.R."/>
            <person name="Volckaert G."/>
            <person name="Aert R."/>
            <person name="Robben J."/>
            <person name="Grymonprez B."/>
            <person name="Weltjens I."/>
            <person name="Vanstreels E."/>
            <person name="Rieger M."/>
            <person name="Schaefer M."/>
            <person name="Mueller-Auer S."/>
            <person name="Gabel C."/>
            <person name="Fuchs M."/>
            <person name="Duesterhoeft A."/>
            <person name="Fritzc C."/>
            <person name="Holzer E."/>
            <person name="Moestl D."/>
            <person name="Hilbert H."/>
            <person name="Borzym K."/>
            <person name="Langer I."/>
            <person name="Beck A."/>
            <person name="Lehrach H."/>
            <person name="Reinhardt R."/>
            <person name="Pohl T.M."/>
            <person name="Eger P."/>
            <person name="Zimmermann W."/>
            <person name="Wedler H."/>
            <person name="Wambutt R."/>
            <person name="Purnelle B."/>
            <person name="Goffeau A."/>
            <person name="Cadieu E."/>
            <person name="Dreano S."/>
            <person name="Gloux S."/>
            <person name="Lelaure V."/>
            <person name="Mottier S."/>
            <person name="Galibert F."/>
            <person name="Aves S.J."/>
            <person name="Xiang Z."/>
            <person name="Hunt C."/>
            <person name="Moore K."/>
            <person name="Hurst S.M."/>
            <person name="Lucas M."/>
            <person name="Rochet M."/>
            <person name="Gaillardin C."/>
            <person name="Tallada V.A."/>
            <person name="Garzon A."/>
            <person name="Thode G."/>
            <person name="Daga R.R."/>
            <person name="Cruzado L."/>
            <person name="Jimenez J."/>
            <person name="Sanchez M."/>
            <person name="del Rey F."/>
            <person name="Benito J."/>
            <person name="Dominguez A."/>
            <person name="Revuelta J.L."/>
            <person name="Moreno S."/>
            <person name="Armstrong J."/>
            <person name="Forsburg S.L."/>
            <person name="Cerutti L."/>
            <person name="Lowe T."/>
            <person name="McCombie W.R."/>
            <person name="Paulsen I."/>
            <person name="Potashkin J."/>
            <person name="Shpakovski G.V."/>
            <person name="Ussery D."/>
            <person name="Barrell B.G."/>
            <person name="Nurse P."/>
        </authorList>
    </citation>
    <scope>NUCLEOTIDE SEQUENCE [LARGE SCALE GENOMIC DNA]</scope>
    <source>
        <strain>972 / ATCC 24843</strain>
    </source>
</reference>
<dbReference type="EC" id="3.4.21.-"/>
<dbReference type="EMBL" id="D89229">
    <property type="protein sequence ID" value="BAA13890.1"/>
    <property type="status" value="ALT_INIT"/>
    <property type="molecule type" value="mRNA"/>
</dbReference>
<dbReference type="EMBL" id="CU329670">
    <property type="protein sequence ID" value="CAB60231.1"/>
    <property type="molecule type" value="Genomic_DNA"/>
</dbReference>
<dbReference type="PIR" id="T43069">
    <property type="entry name" value="T43069"/>
</dbReference>
<dbReference type="RefSeq" id="NP_594848.1">
    <property type="nucleotide sequence ID" value="NM_001020277.2"/>
</dbReference>
<dbReference type="SMR" id="Q9UTS0"/>
<dbReference type="BioGRID" id="279684">
    <property type="interactions" value="3"/>
</dbReference>
<dbReference type="FunCoup" id="Q9UTS0">
    <property type="interactions" value="5"/>
</dbReference>
<dbReference type="STRING" id="284812.Q9UTS0"/>
<dbReference type="MEROPS" id="S08.032"/>
<dbReference type="iPTMnet" id="Q9UTS0"/>
<dbReference type="PaxDb" id="4896-SPAC1006.01.1"/>
<dbReference type="EnsemblFungi" id="SPAC1006.01.1">
    <property type="protein sequence ID" value="SPAC1006.01.1:pep"/>
    <property type="gene ID" value="SPAC1006.01"/>
</dbReference>
<dbReference type="GeneID" id="2543256"/>
<dbReference type="KEGG" id="spo:2543256"/>
<dbReference type="PomBase" id="SPAC1006.01">
    <property type="gene designation" value="psp3"/>
</dbReference>
<dbReference type="VEuPathDB" id="FungiDB:SPAC1006.01"/>
<dbReference type="eggNOG" id="KOG1153">
    <property type="taxonomic scope" value="Eukaryota"/>
</dbReference>
<dbReference type="HOGENOM" id="CLU_011263_1_4_1"/>
<dbReference type="InParanoid" id="Q9UTS0"/>
<dbReference type="OMA" id="CEYSPAR"/>
<dbReference type="PhylomeDB" id="Q9UTS0"/>
<dbReference type="Reactome" id="R-SPO-8866427">
    <property type="pathway name" value="VLDLR internalisation and degradation"/>
</dbReference>
<dbReference type="Reactome" id="R-SPO-8964038">
    <property type="pathway name" value="LDL clearance"/>
</dbReference>
<dbReference type="PRO" id="PR:Q9UTS0"/>
<dbReference type="Proteomes" id="UP000002485">
    <property type="component" value="Chromosome I"/>
</dbReference>
<dbReference type="GO" id="GO:0005615">
    <property type="term" value="C:extracellular space"/>
    <property type="evidence" value="ECO:0000318"/>
    <property type="project" value="GO_Central"/>
</dbReference>
<dbReference type="GO" id="GO:0000324">
    <property type="term" value="C:fungal-type vacuole"/>
    <property type="evidence" value="ECO:0000314"/>
    <property type="project" value="PomBase"/>
</dbReference>
<dbReference type="GO" id="GO:0000328">
    <property type="term" value="C:fungal-type vacuole lumen"/>
    <property type="evidence" value="ECO:0000266"/>
    <property type="project" value="PomBase"/>
</dbReference>
<dbReference type="GO" id="GO:0008233">
    <property type="term" value="F:peptidase activity"/>
    <property type="evidence" value="ECO:0000315"/>
    <property type="project" value="PomBase"/>
</dbReference>
<dbReference type="GO" id="GO:0004252">
    <property type="term" value="F:serine-type endopeptidase activity"/>
    <property type="evidence" value="ECO:0000314"/>
    <property type="project" value="PomBase"/>
</dbReference>
<dbReference type="GO" id="GO:0007039">
    <property type="term" value="P:protein catabolic process in the vacuole"/>
    <property type="evidence" value="ECO:0000266"/>
    <property type="project" value="PomBase"/>
</dbReference>
<dbReference type="GO" id="GO:0031638">
    <property type="term" value="P:zymogen activation"/>
    <property type="evidence" value="ECO:0000315"/>
    <property type="project" value="PomBase"/>
</dbReference>
<dbReference type="CDD" id="cd04077">
    <property type="entry name" value="Peptidases_S8_PCSK9_ProteinaseK_like"/>
    <property type="match status" value="1"/>
</dbReference>
<dbReference type="FunFam" id="3.40.50.200:FF:000007">
    <property type="entry name" value="Subtilisin-like serine protease"/>
    <property type="match status" value="1"/>
</dbReference>
<dbReference type="Gene3D" id="3.30.70.80">
    <property type="entry name" value="Peptidase S8 propeptide/proteinase inhibitor I9"/>
    <property type="match status" value="1"/>
</dbReference>
<dbReference type="Gene3D" id="3.40.50.200">
    <property type="entry name" value="Peptidase S8/S53 domain"/>
    <property type="match status" value="1"/>
</dbReference>
<dbReference type="InterPro" id="IPR034193">
    <property type="entry name" value="PCSK9_ProteinaseK-like"/>
</dbReference>
<dbReference type="InterPro" id="IPR000209">
    <property type="entry name" value="Peptidase_S8/S53_dom"/>
</dbReference>
<dbReference type="InterPro" id="IPR036852">
    <property type="entry name" value="Peptidase_S8/S53_dom_sf"/>
</dbReference>
<dbReference type="InterPro" id="IPR023827">
    <property type="entry name" value="Peptidase_S8_Asp-AS"/>
</dbReference>
<dbReference type="InterPro" id="IPR022398">
    <property type="entry name" value="Peptidase_S8_His-AS"/>
</dbReference>
<dbReference type="InterPro" id="IPR023828">
    <property type="entry name" value="Peptidase_S8_Ser-AS"/>
</dbReference>
<dbReference type="InterPro" id="IPR050131">
    <property type="entry name" value="Peptidase_S8_subtilisin-like"/>
</dbReference>
<dbReference type="InterPro" id="IPR015500">
    <property type="entry name" value="Peptidase_S8_subtilisin-rel"/>
</dbReference>
<dbReference type="InterPro" id="IPR010259">
    <property type="entry name" value="S8pro/Inhibitor_I9"/>
</dbReference>
<dbReference type="InterPro" id="IPR037045">
    <property type="entry name" value="S8pro/Inhibitor_I9_sf"/>
</dbReference>
<dbReference type="PANTHER" id="PTHR43806">
    <property type="entry name" value="PEPTIDASE S8"/>
    <property type="match status" value="1"/>
</dbReference>
<dbReference type="PANTHER" id="PTHR43806:SF57">
    <property type="entry name" value="SUBTILASE-TYPE PROTEINASE PSP3"/>
    <property type="match status" value="1"/>
</dbReference>
<dbReference type="Pfam" id="PF05922">
    <property type="entry name" value="Inhibitor_I9"/>
    <property type="match status" value="1"/>
</dbReference>
<dbReference type="Pfam" id="PF00082">
    <property type="entry name" value="Peptidase_S8"/>
    <property type="match status" value="1"/>
</dbReference>
<dbReference type="PRINTS" id="PR00723">
    <property type="entry name" value="SUBTILISIN"/>
</dbReference>
<dbReference type="SUPFAM" id="SSF52743">
    <property type="entry name" value="Subtilisin-like"/>
    <property type="match status" value="1"/>
</dbReference>
<dbReference type="PROSITE" id="PS51892">
    <property type="entry name" value="SUBTILASE"/>
    <property type="match status" value="1"/>
</dbReference>
<dbReference type="PROSITE" id="PS00136">
    <property type="entry name" value="SUBTILASE_ASP"/>
    <property type="match status" value="1"/>
</dbReference>
<dbReference type="PROSITE" id="PS00137">
    <property type="entry name" value="SUBTILASE_HIS"/>
    <property type="match status" value="1"/>
</dbReference>
<dbReference type="PROSITE" id="PS00138">
    <property type="entry name" value="SUBTILASE_SER"/>
    <property type="match status" value="1"/>
</dbReference>
<evidence type="ECO:0000255" key="1"/>
<evidence type="ECO:0000255" key="2">
    <source>
        <dbReference type="PROSITE-ProRule" id="PRU01240"/>
    </source>
</evidence>
<evidence type="ECO:0000305" key="3"/>
<protein>
    <recommendedName>
        <fullName>Subtilase-type proteinase psp3</fullName>
        <ecNumber>3.4.21.-</ecNumber>
    </recommendedName>
</protein>
<feature type="signal peptide" evidence="1">
    <location>
        <begin position="1"/>
        <end position="20"/>
    </location>
</feature>
<feature type="chain" id="PRO_0000027150" description="Subtilase-type proteinase psp3">
    <location>
        <begin position="21"/>
        <end position="451"/>
    </location>
</feature>
<feature type="domain" description="Inhibitor I9" evidence="1">
    <location>
        <begin position="80"/>
        <end position="161"/>
    </location>
</feature>
<feature type="domain" description="Peptidase S8" evidence="2">
    <location>
        <begin position="169"/>
        <end position="451"/>
    </location>
</feature>
<feature type="active site" description="Charge relay system" evidence="2">
    <location>
        <position position="205"/>
    </location>
</feature>
<feature type="active site" description="Charge relay system" evidence="2">
    <location>
        <position position="237"/>
    </location>
</feature>
<feature type="active site" description="Charge relay system" evidence="2">
    <location>
        <position position="394"/>
    </location>
</feature>
<feature type="sequence conflict" description="In Ref. 1; BAA13890." evidence="3" ref="1">
    <original>A</original>
    <variation>T</variation>
    <location>
        <position position="256"/>
    </location>
</feature>
<feature type="sequence conflict" description="In Ref. 1; BAA13890." evidence="3" ref="1">
    <original>AV</original>
    <variation>SF</variation>
    <location>
        <begin position="260"/>
        <end position="261"/>
    </location>
</feature>
<feature type="sequence conflict" description="In Ref. 1; BAA13890." evidence="3" ref="1">
    <original>D</original>
    <variation>V</variation>
    <location>
        <position position="267"/>
    </location>
</feature>
<feature type="sequence conflict" description="In Ref. 1; BAA13890." evidence="3" ref="1">
    <original>T</original>
    <variation>S</variation>
    <location>
        <position position="271"/>
    </location>
</feature>
<feature type="sequence conflict" description="In Ref. 1; BAA13890." evidence="3" ref="1">
    <original>FFAV</original>
    <variation>SCR</variation>
    <location>
        <begin position="322"/>
        <end position="325"/>
    </location>
</feature>
<feature type="sequence conflict" description="In Ref. 1; BAA13890." evidence="3" ref="1">
    <original>A</original>
    <variation>G</variation>
    <location>
        <position position="331"/>
    </location>
</feature>
<organism>
    <name type="scientific">Schizosaccharomyces pombe (strain 972 / ATCC 24843)</name>
    <name type="common">Fission yeast</name>
    <dbReference type="NCBI Taxonomy" id="284812"/>
    <lineage>
        <taxon>Eukaryota</taxon>
        <taxon>Fungi</taxon>
        <taxon>Dikarya</taxon>
        <taxon>Ascomycota</taxon>
        <taxon>Taphrinomycotina</taxon>
        <taxon>Schizosaccharomycetes</taxon>
        <taxon>Schizosaccharomycetales</taxon>
        <taxon>Schizosaccharomycetaceae</taxon>
        <taxon>Schizosaccharomyces</taxon>
    </lineage>
</organism>
<proteinExistence type="evidence at transcript level"/>
<gene>
    <name type="primary">psp3</name>
    <name type="ORF">SPAC1006.01</name>
</gene>
<accession>Q9UTS0</accession>
<accession>P78879</accession>
<keyword id="KW-0378">Hydrolase</keyword>
<keyword id="KW-0645">Protease</keyword>
<keyword id="KW-1185">Reference proteome</keyword>
<keyword id="KW-0720">Serine protease</keyword>
<keyword id="KW-0732">Signal</keyword>